<comment type="function">
    <text>Involved in oxygen transport from gills to the various peripheral tissues.</text>
</comment>
<comment type="subunit">
    <text>Hb1 is a heterotetramer of two alpha chains and two beta-1 chains, while Hb2 is a heterotetramer of two alpha chains and two beta-2 chains.</text>
</comment>
<comment type="tissue specificity">
    <text>Red blood cells.</text>
</comment>
<comment type="miscellaneous">
    <text>This fish has two hemoglobins: Hb1 (major) and Hb2 (about 5% of the total). They display the Bohr and root effects.</text>
</comment>
<comment type="similarity">
    <text evidence="1">Belongs to the globin family.</text>
</comment>
<organism>
    <name type="scientific">Cygnodraco mawsoni</name>
    <name type="common">Antarctic dragonfish</name>
    <dbReference type="NCBI Taxonomy" id="8216"/>
    <lineage>
        <taxon>Eukaryota</taxon>
        <taxon>Metazoa</taxon>
        <taxon>Chordata</taxon>
        <taxon>Craniata</taxon>
        <taxon>Vertebrata</taxon>
        <taxon>Euteleostomi</taxon>
        <taxon>Actinopterygii</taxon>
        <taxon>Neopterygii</taxon>
        <taxon>Teleostei</taxon>
        <taxon>Neoteleostei</taxon>
        <taxon>Acanthomorphata</taxon>
        <taxon>Eupercaria</taxon>
        <taxon>Perciformes</taxon>
        <taxon>Notothenioidei</taxon>
        <taxon>Bathydraconidae</taxon>
        <taxon>Cygnodraco</taxon>
    </lineage>
</organism>
<protein>
    <recommendedName>
        <fullName>Hemoglobin subunit alpha</fullName>
    </recommendedName>
    <alternativeName>
        <fullName>Alpha-globin</fullName>
    </alternativeName>
    <alternativeName>
        <fullName>Hemoglobin alpha chain</fullName>
    </alternativeName>
</protein>
<keyword id="KW-0007">Acetylation</keyword>
<keyword id="KW-0903">Direct protein sequencing</keyword>
<keyword id="KW-0349">Heme</keyword>
<keyword id="KW-0408">Iron</keyword>
<keyword id="KW-0479">Metal-binding</keyword>
<keyword id="KW-0561">Oxygen transport</keyword>
<keyword id="KW-0813">Transport</keyword>
<dbReference type="PIR" id="S16184">
    <property type="entry name" value="S16184"/>
</dbReference>
<dbReference type="SMR" id="P23016"/>
<dbReference type="iPTMnet" id="P23016"/>
<dbReference type="GO" id="GO:0072562">
    <property type="term" value="C:blood microparticle"/>
    <property type="evidence" value="ECO:0007669"/>
    <property type="project" value="TreeGrafter"/>
</dbReference>
<dbReference type="GO" id="GO:0031838">
    <property type="term" value="C:haptoglobin-hemoglobin complex"/>
    <property type="evidence" value="ECO:0007669"/>
    <property type="project" value="TreeGrafter"/>
</dbReference>
<dbReference type="GO" id="GO:0005833">
    <property type="term" value="C:hemoglobin complex"/>
    <property type="evidence" value="ECO:0007669"/>
    <property type="project" value="InterPro"/>
</dbReference>
<dbReference type="GO" id="GO:0031720">
    <property type="term" value="F:haptoglobin binding"/>
    <property type="evidence" value="ECO:0007669"/>
    <property type="project" value="TreeGrafter"/>
</dbReference>
<dbReference type="GO" id="GO:0020037">
    <property type="term" value="F:heme binding"/>
    <property type="evidence" value="ECO:0007669"/>
    <property type="project" value="InterPro"/>
</dbReference>
<dbReference type="GO" id="GO:0005506">
    <property type="term" value="F:iron ion binding"/>
    <property type="evidence" value="ECO:0007669"/>
    <property type="project" value="InterPro"/>
</dbReference>
<dbReference type="GO" id="GO:0043177">
    <property type="term" value="F:organic acid binding"/>
    <property type="evidence" value="ECO:0007669"/>
    <property type="project" value="TreeGrafter"/>
</dbReference>
<dbReference type="GO" id="GO:0019825">
    <property type="term" value="F:oxygen binding"/>
    <property type="evidence" value="ECO:0007669"/>
    <property type="project" value="InterPro"/>
</dbReference>
<dbReference type="GO" id="GO:0005344">
    <property type="term" value="F:oxygen carrier activity"/>
    <property type="evidence" value="ECO:0007669"/>
    <property type="project" value="UniProtKB-KW"/>
</dbReference>
<dbReference type="GO" id="GO:0004601">
    <property type="term" value="F:peroxidase activity"/>
    <property type="evidence" value="ECO:0007669"/>
    <property type="project" value="TreeGrafter"/>
</dbReference>
<dbReference type="GO" id="GO:0042744">
    <property type="term" value="P:hydrogen peroxide catabolic process"/>
    <property type="evidence" value="ECO:0007669"/>
    <property type="project" value="TreeGrafter"/>
</dbReference>
<dbReference type="CDD" id="cd08927">
    <property type="entry name" value="Hb-alpha-like"/>
    <property type="match status" value="1"/>
</dbReference>
<dbReference type="FunFam" id="1.10.490.10:FF:000002">
    <property type="entry name" value="Hemoglobin subunit alpha"/>
    <property type="match status" value="1"/>
</dbReference>
<dbReference type="Gene3D" id="1.10.490.10">
    <property type="entry name" value="Globins"/>
    <property type="match status" value="1"/>
</dbReference>
<dbReference type="InterPro" id="IPR000971">
    <property type="entry name" value="Globin"/>
</dbReference>
<dbReference type="InterPro" id="IPR009050">
    <property type="entry name" value="Globin-like_sf"/>
</dbReference>
<dbReference type="InterPro" id="IPR012292">
    <property type="entry name" value="Globin/Proto"/>
</dbReference>
<dbReference type="InterPro" id="IPR002338">
    <property type="entry name" value="Hemoglobin_a-typ"/>
</dbReference>
<dbReference type="InterPro" id="IPR050056">
    <property type="entry name" value="Hemoglobin_oxygen_transport"/>
</dbReference>
<dbReference type="InterPro" id="IPR002339">
    <property type="entry name" value="Hemoglobin_pi"/>
</dbReference>
<dbReference type="PANTHER" id="PTHR11442">
    <property type="entry name" value="HEMOGLOBIN FAMILY MEMBER"/>
    <property type="match status" value="1"/>
</dbReference>
<dbReference type="PANTHER" id="PTHR11442:SF41">
    <property type="entry name" value="HEMOGLOBIN SUBUNIT ZETA"/>
    <property type="match status" value="1"/>
</dbReference>
<dbReference type="Pfam" id="PF00042">
    <property type="entry name" value="Globin"/>
    <property type="match status" value="1"/>
</dbReference>
<dbReference type="PRINTS" id="PR00612">
    <property type="entry name" value="ALPHAHAEM"/>
</dbReference>
<dbReference type="PRINTS" id="PR00815">
    <property type="entry name" value="PIHAEM"/>
</dbReference>
<dbReference type="SUPFAM" id="SSF46458">
    <property type="entry name" value="Globin-like"/>
    <property type="match status" value="1"/>
</dbReference>
<dbReference type="PROSITE" id="PS01033">
    <property type="entry name" value="GLOBIN"/>
    <property type="match status" value="1"/>
</dbReference>
<accession>P23016</accession>
<gene>
    <name type="primary">hba</name>
</gene>
<evidence type="ECO:0000255" key="1">
    <source>
        <dbReference type="PROSITE-ProRule" id="PRU00238"/>
    </source>
</evidence>
<evidence type="ECO:0000269" key="2">
    <source>
    </source>
</evidence>
<feature type="chain" id="PRO_0000052612" description="Hemoglobin subunit alpha">
    <location>
        <begin position="1"/>
        <end position="142"/>
    </location>
</feature>
<feature type="domain" description="Globin" evidence="1">
    <location>
        <begin position="1"/>
        <end position="142"/>
    </location>
</feature>
<feature type="binding site" evidence="1">
    <location>
        <position position="59"/>
    </location>
    <ligand>
        <name>O2</name>
        <dbReference type="ChEBI" id="CHEBI:15379"/>
    </ligand>
</feature>
<feature type="binding site" description="proximal binding residue" evidence="1">
    <location>
        <position position="88"/>
    </location>
    <ligand>
        <name>heme b</name>
        <dbReference type="ChEBI" id="CHEBI:60344"/>
    </ligand>
    <ligandPart>
        <name>Fe</name>
        <dbReference type="ChEBI" id="CHEBI:18248"/>
    </ligandPart>
</feature>
<feature type="modified residue" description="N-acetylserine" evidence="2">
    <location>
        <position position="1"/>
    </location>
</feature>
<name>HBA_CYGMA</name>
<proteinExistence type="evidence at protein level"/>
<sequence>SLSDKDKAAVKALWTTISKSSDAIGNDALSRMIVVYPQTKTYFSHWPDVTPGSTHIRDHGKKVMGGISLAVSKIDDLKTGLFELSEQHAFKLRVDPANFKILNHCILVVIATMFPKEFTPEAHVSLDKFLSGVALALAERYR</sequence>
<reference key="1">
    <citation type="journal article" date="1991" name="Biochim. Biophys. Acta">
        <title>The hemoglobins of the cold-adapted Antarctic teleost Cygnodraco mawsoni.</title>
        <authorList>
            <person name="Caruso C."/>
            <person name="Rutigliano B."/>
            <person name="Romano M."/>
            <person name="di Prisco G."/>
        </authorList>
    </citation>
    <scope>PROTEIN SEQUENCE</scope>
    <scope>ACETYLATION AT SER-1</scope>
</reference>